<protein>
    <recommendedName>
        <fullName evidence="1">CTP synthase</fullName>
        <ecNumber evidence="1">6.3.4.2</ecNumber>
    </recommendedName>
    <alternativeName>
        <fullName evidence="1">Cytidine 5'-triphosphate synthase</fullName>
    </alternativeName>
    <alternativeName>
        <fullName evidence="1">Cytidine triphosphate synthetase</fullName>
        <shortName evidence="1">CTP synthetase</shortName>
        <shortName evidence="1">CTPS</shortName>
    </alternativeName>
    <alternativeName>
        <fullName evidence="1">UTP--ammonia ligase</fullName>
    </alternativeName>
</protein>
<accession>A3M5Y3</accession>
<evidence type="ECO:0000255" key="1">
    <source>
        <dbReference type="HAMAP-Rule" id="MF_01227"/>
    </source>
</evidence>
<comment type="function">
    <text evidence="1">Catalyzes the ATP-dependent amination of UTP to CTP with either L-glutamine or ammonia as the source of nitrogen. Regulates intracellular CTP levels through interactions with the four ribonucleotide triphosphates.</text>
</comment>
<comment type="catalytic activity">
    <reaction evidence="1">
        <text>UTP + L-glutamine + ATP + H2O = CTP + L-glutamate + ADP + phosphate + 2 H(+)</text>
        <dbReference type="Rhea" id="RHEA:26426"/>
        <dbReference type="ChEBI" id="CHEBI:15377"/>
        <dbReference type="ChEBI" id="CHEBI:15378"/>
        <dbReference type="ChEBI" id="CHEBI:29985"/>
        <dbReference type="ChEBI" id="CHEBI:30616"/>
        <dbReference type="ChEBI" id="CHEBI:37563"/>
        <dbReference type="ChEBI" id="CHEBI:43474"/>
        <dbReference type="ChEBI" id="CHEBI:46398"/>
        <dbReference type="ChEBI" id="CHEBI:58359"/>
        <dbReference type="ChEBI" id="CHEBI:456216"/>
        <dbReference type="EC" id="6.3.4.2"/>
    </reaction>
</comment>
<comment type="catalytic activity">
    <reaction evidence="1">
        <text>L-glutamine + H2O = L-glutamate + NH4(+)</text>
        <dbReference type="Rhea" id="RHEA:15889"/>
        <dbReference type="ChEBI" id="CHEBI:15377"/>
        <dbReference type="ChEBI" id="CHEBI:28938"/>
        <dbReference type="ChEBI" id="CHEBI:29985"/>
        <dbReference type="ChEBI" id="CHEBI:58359"/>
    </reaction>
</comment>
<comment type="catalytic activity">
    <reaction evidence="1">
        <text>UTP + NH4(+) + ATP = CTP + ADP + phosphate + 2 H(+)</text>
        <dbReference type="Rhea" id="RHEA:16597"/>
        <dbReference type="ChEBI" id="CHEBI:15378"/>
        <dbReference type="ChEBI" id="CHEBI:28938"/>
        <dbReference type="ChEBI" id="CHEBI:30616"/>
        <dbReference type="ChEBI" id="CHEBI:37563"/>
        <dbReference type="ChEBI" id="CHEBI:43474"/>
        <dbReference type="ChEBI" id="CHEBI:46398"/>
        <dbReference type="ChEBI" id="CHEBI:456216"/>
    </reaction>
</comment>
<comment type="activity regulation">
    <text evidence="1">Allosterically activated by GTP, when glutamine is the substrate; GTP has no effect on the reaction when ammonia is the substrate. The allosteric effector GTP functions by stabilizing the protein conformation that binds the tetrahedral intermediate(s) formed during glutamine hydrolysis. Inhibited by the product CTP, via allosteric rather than competitive inhibition.</text>
</comment>
<comment type="pathway">
    <text evidence="1">Pyrimidine metabolism; CTP biosynthesis via de novo pathway; CTP from UDP: step 2/2.</text>
</comment>
<comment type="subunit">
    <text evidence="1">Homotetramer.</text>
</comment>
<comment type="miscellaneous">
    <text evidence="1">CTPSs have evolved a hybrid strategy for distinguishing between UTP and CTP. The overlapping regions of the product feedback inhibitory and substrate sites recognize a common feature in both compounds, the triphosphate moiety. To differentiate isosteric substrate and product pyrimidine rings, an additional pocket far from the expected kinase/ligase catalytic site, specifically recognizes the cytosine and ribose portions of the product inhibitor.</text>
</comment>
<comment type="similarity">
    <text evidence="1">Belongs to the CTP synthase family.</text>
</comment>
<gene>
    <name evidence="1" type="primary">pyrG</name>
    <name type="ordered locus">A1S_1900</name>
</gene>
<name>PYRG_ACIBT</name>
<sequence>MTHFIFVTGGVVSSLGKGISAASVAALLEARGLKVTMVKMDPYINVDPGTMSPFQHGEVFVTEDGAETDLDLGYYERFLRRAKMTKLNNFTSGRVYQDVLNKERRGDYLGGTVQVIPHITDNIKERVLRAGEGYDVAIVEIGGTVGDIESLPFMESVRQLMVELGHKRTMLMHLTLLPYIKSAAELKTKPTQHSVKELLSIGIQPDILICRTEYDVDADTKRKIALFTNVEARAVVVCKDAKTIYQIPRGFYEQNVDDLICERFGFTDLPEADLTDWDNVVEALLNPEYTVRVAMVGKYVELPDAYKSVNEALLHAGIKNRVKVQIDYVNAEELESQDVSILKTADAILVPGGFGERGTEGKMKAIQYARENGIPFLGICLGMQLAVIEYARHVAGMPEASSTEFNRSTKYPLIGLITEWLDERGELQQRSLESDLGGTMRLGAQKSELVEGTKTREVYGKAEITERHRHRYEMNNRFIEAIEQAGMKISGYSSAQHLVETVEIPEHPWFIAVQFHPEFTSSPRDGHPLFASFIDAAKTQHQKSK</sequence>
<proteinExistence type="inferred from homology"/>
<keyword id="KW-0067">ATP-binding</keyword>
<keyword id="KW-0315">Glutamine amidotransferase</keyword>
<keyword id="KW-0436">Ligase</keyword>
<keyword id="KW-0460">Magnesium</keyword>
<keyword id="KW-0479">Metal-binding</keyword>
<keyword id="KW-0547">Nucleotide-binding</keyword>
<keyword id="KW-0665">Pyrimidine biosynthesis</keyword>
<organism>
    <name type="scientific">Acinetobacter baumannii (strain ATCC 17978 / DSM 105126 / CIP 53.77 / LMG 1025 / NCDC KC755 / 5377)</name>
    <dbReference type="NCBI Taxonomy" id="400667"/>
    <lineage>
        <taxon>Bacteria</taxon>
        <taxon>Pseudomonadati</taxon>
        <taxon>Pseudomonadota</taxon>
        <taxon>Gammaproteobacteria</taxon>
        <taxon>Moraxellales</taxon>
        <taxon>Moraxellaceae</taxon>
        <taxon>Acinetobacter</taxon>
        <taxon>Acinetobacter calcoaceticus/baumannii complex</taxon>
    </lineage>
</organism>
<reference key="1">
    <citation type="journal article" date="2007" name="Genes Dev.">
        <title>New insights into Acinetobacter baumannii pathogenesis revealed by high-density pyrosequencing and transposon mutagenesis.</title>
        <authorList>
            <person name="Smith M.G."/>
            <person name="Gianoulis T.A."/>
            <person name="Pukatzki S."/>
            <person name="Mekalanos J.J."/>
            <person name="Ornston L.N."/>
            <person name="Gerstein M."/>
            <person name="Snyder M."/>
        </authorList>
    </citation>
    <scope>NUCLEOTIDE SEQUENCE [LARGE SCALE GENOMIC DNA]</scope>
    <source>
        <strain>ATCC 17978 / DSM 105126 / CIP 53.77 / LMG 1025 / NCDC KC755 / 5377</strain>
    </source>
</reference>
<feature type="chain" id="PRO_1000139359" description="CTP synthase">
    <location>
        <begin position="1"/>
        <end position="545"/>
    </location>
</feature>
<feature type="domain" description="Glutamine amidotransferase type-1" evidence="1">
    <location>
        <begin position="292"/>
        <end position="543"/>
    </location>
</feature>
<feature type="region of interest" description="Amidoligase domain" evidence="1">
    <location>
        <begin position="1"/>
        <end position="266"/>
    </location>
</feature>
<feature type="active site" description="Nucleophile; for glutamine hydrolysis" evidence="1">
    <location>
        <position position="380"/>
    </location>
</feature>
<feature type="active site" evidence="1">
    <location>
        <position position="516"/>
    </location>
</feature>
<feature type="active site" evidence="1">
    <location>
        <position position="518"/>
    </location>
</feature>
<feature type="binding site" evidence="1">
    <location>
        <position position="13"/>
    </location>
    <ligand>
        <name>CTP</name>
        <dbReference type="ChEBI" id="CHEBI:37563"/>
        <note>allosteric inhibitor</note>
    </ligand>
</feature>
<feature type="binding site" evidence="1">
    <location>
        <position position="13"/>
    </location>
    <ligand>
        <name>UTP</name>
        <dbReference type="ChEBI" id="CHEBI:46398"/>
    </ligand>
</feature>
<feature type="binding site" evidence="1">
    <location>
        <begin position="14"/>
        <end position="19"/>
    </location>
    <ligand>
        <name>ATP</name>
        <dbReference type="ChEBI" id="CHEBI:30616"/>
    </ligand>
</feature>
<feature type="binding site" evidence="1">
    <location>
        <position position="71"/>
    </location>
    <ligand>
        <name>ATP</name>
        <dbReference type="ChEBI" id="CHEBI:30616"/>
    </ligand>
</feature>
<feature type="binding site" evidence="1">
    <location>
        <position position="71"/>
    </location>
    <ligand>
        <name>Mg(2+)</name>
        <dbReference type="ChEBI" id="CHEBI:18420"/>
    </ligand>
</feature>
<feature type="binding site" evidence="1">
    <location>
        <position position="140"/>
    </location>
    <ligand>
        <name>Mg(2+)</name>
        <dbReference type="ChEBI" id="CHEBI:18420"/>
    </ligand>
</feature>
<feature type="binding site" evidence="1">
    <location>
        <begin position="147"/>
        <end position="149"/>
    </location>
    <ligand>
        <name>CTP</name>
        <dbReference type="ChEBI" id="CHEBI:37563"/>
        <note>allosteric inhibitor</note>
    </ligand>
</feature>
<feature type="binding site" evidence="1">
    <location>
        <begin position="187"/>
        <end position="192"/>
    </location>
    <ligand>
        <name>CTP</name>
        <dbReference type="ChEBI" id="CHEBI:37563"/>
        <note>allosteric inhibitor</note>
    </ligand>
</feature>
<feature type="binding site" evidence="1">
    <location>
        <begin position="187"/>
        <end position="192"/>
    </location>
    <ligand>
        <name>UTP</name>
        <dbReference type="ChEBI" id="CHEBI:46398"/>
    </ligand>
</feature>
<feature type="binding site" evidence="1">
    <location>
        <position position="223"/>
    </location>
    <ligand>
        <name>CTP</name>
        <dbReference type="ChEBI" id="CHEBI:37563"/>
        <note>allosteric inhibitor</note>
    </ligand>
</feature>
<feature type="binding site" evidence="1">
    <location>
        <position position="223"/>
    </location>
    <ligand>
        <name>UTP</name>
        <dbReference type="ChEBI" id="CHEBI:46398"/>
    </ligand>
</feature>
<feature type="binding site" evidence="1">
    <location>
        <begin position="239"/>
        <end position="241"/>
    </location>
    <ligand>
        <name>ATP</name>
        <dbReference type="ChEBI" id="CHEBI:30616"/>
    </ligand>
</feature>
<feature type="binding site" evidence="1">
    <location>
        <position position="353"/>
    </location>
    <ligand>
        <name>L-glutamine</name>
        <dbReference type="ChEBI" id="CHEBI:58359"/>
    </ligand>
</feature>
<feature type="binding site" evidence="1">
    <location>
        <begin position="381"/>
        <end position="384"/>
    </location>
    <ligand>
        <name>L-glutamine</name>
        <dbReference type="ChEBI" id="CHEBI:58359"/>
    </ligand>
</feature>
<feature type="binding site" evidence="1">
    <location>
        <position position="404"/>
    </location>
    <ligand>
        <name>L-glutamine</name>
        <dbReference type="ChEBI" id="CHEBI:58359"/>
    </ligand>
</feature>
<feature type="binding site" evidence="1">
    <location>
        <position position="471"/>
    </location>
    <ligand>
        <name>L-glutamine</name>
        <dbReference type="ChEBI" id="CHEBI:58359"/>
    </ligand>
</feature>
<dbReference type="EC" id="6.3.4.2" evidence="1"/>
<dbReference type="EMBL" id="CP000521">
    <property type="protein sequence ID" value="ABO12327.2"/>
    <property type="molecule type" value="Genomic_DNA"/>
</dbReference>
<dbReference type="RefSeq" id="WP_000148658.1">
    <property type="nucleotide sequence ID" value="NZ_CP053098.1"/>
</dbReference>
<dbReference type="SMR" id="A3M5Y3"/>
<dbReference type="MEROPS" id="C26.964"/>
<dbReference type="KEGG" id="acb:A1S_1900"/>
<dbReference type="HOGENOM" id="CLU_011675_5_0_6"/>
<dbReference type="UniPathway" id="UPA00159">
    <property type="reaction ID" value="UER00277"/>
</dbReference>
<dbReference type="GO" id="GO:0005829">
    <property type="term" value="C:cytosol"/>
    <property type="evidence" value="ECO:0007669"/>
    <property type="project" value="TreeGrafter"/>
</dbReference>
<dbReference type="GO" id="GO:0005524">
    <property type="term" value="F:ATP binding"/>
    <property type="evidence" value="ECO:0007669"/>
    <property type="project" value="UniProtKB-KW"/>
</dbReference>
<dbReference type="GO" id="GO:0003883">
    <property type="term" value="F:CTP synthase activity"/>
    <property type="evidence" value="ECO:0007669"/>
    <property type="project" value="UniProtKB-UniRule"/>
</dbReference>
<dbReference type="GO" id="GO:0004359">
    <property type="term" value="F:glutaminase activity"/>
    <property type="evidence" value="ECO:0007669"/>
    <property type="project" value="RHEA"/>
</dbReference>
<dbReference type="GO" id="GO:0042802">
    <property type="term" value="F:identical protein binding"/>
    <property type="evidence" value="ECO:0007669"/>
    <property type="project" value="TreeGrafter"/>
</dbReference>
<dbReference type="GO" id="GO:0046872">
    <property type="term" value="F:metal ion binding"/>
    <property type="evidence" value="ECO:0007669"/>
    <property type="project" value="UniProtKB-KW"/>
</dbReference>
<dbReference type="GO" id="GO:0044210">
    <property type="term" value="P:'de novo' CTP biosynthetic process"/>
    <property type="evidence" value="ECO:0007669"/>
    <property type="project" value="UniProtKB-UniRule"/>
</dbReference>
<dbReference type="GO" id="GO:0019856">
    <property type="term" value="P:pyrimidine nucleobase biosynthetic process"/>
    <property type="evidence" value="ECO:0007669"/>
    <property type="project" value="TreeGrafter"/>
</dbReference>
<dbReference type="CDD" id="cd03113">
    <property type="entry name" value="CTPS_N"/>
    <property type="match status" value="1"/>
</dbReference>
<dbReference type="CDD" id="cd01746">
    <property type="entry name" value="GATase1_CTP_Synthase"/>
    <property type="match status" value="1"/>
</dbReference>
<dbReference type="FunFam" id="3.40.50.300:FF:000009">
    <property type="entry name" value="CTP synthase"/>
    <property type="match status" value="1"/>
</dbReference>
<dbReference type="FunFam" id="3.40.50.880:FF:000002">
    <property type="entry name" value="CTP synthase"/>
    <property type="match status" value="1"/>
</dbReference>
<dbReference type="Gene3D" id="3.40.50.880">
    <property type="match status" value="1"/>
</dbReference>
<dbReference type="Gene3D" id="3.40.50.300">
    <property type="entry name" value="P-loop containing nucleotide triphosphate hydrolases"/>
    <property type="match status" value="1"/>
</dbReference>
<dbReference type="HAMAP" id="MF_01227">
    <property type="entry name" value="PyrG"/>
    <property type="match status" value="1"/>
</dbReference>
<dbReference type="InterPro" id="IPR029062">
    <property type="entry name" value="Class_I_gatase-like"/>
</dbReference>
<dbReference type="InterPro" id="IPR004468">
    <property type="entry name" value="CTP_synthase"/>
</dbReference>
<dbReference type="InterPro" id="IPR017456">
    <property type="entry name" value="CTP_synthase_N"/>
</dbReference>
<dbReference type="InterPro" id="IPR017926">
    <property type="entry name" value="GATASE"/>
</dbReference>
<dbReference type="InterPro" id="IPR033828">
    <property type="entry name" value="GATase1_CTP_Synthase"/>
</dbReference>
<dbReference type="InterPro" id="IPR027417">
    <property type="entry name" value="P-loop_NTPase"/>
</dbReference>
<dbReference type="NCBIfam" id="NF003792">
    <property type="entry name" value="PRK05380.1"/>
    <property type="match status" value="1"/>
</dbReference>
<dbReference type="NCBIfam" id="TIGR00337">
    <property type="entry name" value="PyrG"/>
    <property type="match status" value="1"/>
</dbReference>
<dbReference type="PANTHER" id="PTHR11550">
    <property type="entry name" value="CTP SYNTHASE"/>
    <property type="match status" value="1"/>
</dbReference>
<dbReference type="PANTHER" id="PTHR11550:SF0">
    <property type="entry name" value="CTP SYNTHASE-RELATED"/>
    <property type="match status" value="1"/>
</dbReference>
<dbReference type="Pfam" id="PF06418">
    <property type="entry name" value="CTP_synth_N"/>
    <property type="match status" value="1"/>
</dbReference>
<dbReference type="Pfam" id="PF00117">
    <property type="entry name" value="GATase"/>
    <property type="match status" value="1"/>
</dbReference>
<dbReference type="SUPFAM" id="SSF52317">
    <property type="entry name" value="Class I glutamine amidotransferase-like"/>
    <property type="match status" value="1"/>
</dbReference>
<dbReference type="SUPFAM" id="SSF52540">
    <property type="entry name" value="P-loop containing nucleoside triphosphate hydrolases"/>
    <property type="match status" value="1"/>
</dbReference>
<dbReference type="PROSITE" id="PS51273">
    <property type="entry name" value="GATASE_TYPE_1"/>
    <property type="match status" value="1"/>
</dbReference>